<dbReference type="EMBL" id="CP000232">
    <property type="protein sequence ID" value="ABC19957.1"/>
    <property type="molecule type" value="Genomic_DNA"/>
</dbReference>
<dbReference type="RefSeq" id="YP_430500.1">
    <property type="nucleotide sequence ID" value="NC_007644.1"/>
</dbReference>
<dbReference type="STRING" id="264732.Moth_1655"/>
<dbReference type="EnsemblBacteria" id="ABC19957">
    <property type="protein sequence ID" value="ABC19957"/>
    <property type="gene ID" value="Moth_1655"/>
</dbReference>
<dbReference type="KEGG" id="mta:Moth_1655"/>
<dbReference type="PATRIC" id="fig|264732.11.peg.1795"/>
<dbReference type="eggNOG" id="COG1342">
    <property type="taxonomic scope" value="Bacteria"/>
</dbReference>
<dbReference type="HOGENOM" id="CLU_094511_0_1_9"/>
<dbReference type="OrthoDB" id="280278at2"/>
<dbReference type="Gene3D" id="3.30.2320.80">
    <property type="match status" value="1"/>
</dbReference>
<dbReference type="HAMAP" id="MF_00674">
    <property type="entry name" value="UPF0251"/>
    <property type="match status" value="1"/>
</dbReference>
<dbReference type="InterPro" id="IPR002852">
    <property type="entry name" value="UPF0251"/>
</dbReference>
<dbReference type="PANTHER" id="PTHR37478">
    <property type="match status" value="1"/>
</dbReference>
<dbReference type="PANTHER" id="PTHR37478:SF2">
    <property type="entry name" value="UPF0251 PROTEIN TK0562"/>
    <property type="match status" value="1"/>
</dbReference>
<dbReference type="Pfam" id="PF02001">
    <property type="entry name" value="DUF134"/>
    <property type="match status" value="1"/>
</dbReference>
<reference key="1">
    <citation type="journal article" date="2008" name="Environ. Microbiol.">
        <title>The complete genome sequence of Moorella thermoacetica (f. Clostridium thermoaceticum).</title>
        <authorList>
            <person name="Pierce E."/>
            <person name="Xie G."/>
            <person name="Barabote R.D."/>
            <person name="Saunders E."/>
            <person name="Han C.S."/>
            <person name="Detter J.C."/>
            <person name="Richardson P."/>
            <person name="Brettin T.S."/>
            <person name="Das A."/>
            <person name="Ljungdahl L.G."/>
            <person name="Ragsdale S.W."/>
        </authorList>
    </citation>
    <scope>NUCLEOTIDE SEQUENCE [LARGE SCALE GENOMIC DNA]</scope>
    <source>
        <strain>ATCC 39073 / JCM 9320</strain>
    </source>
</reference>
<gene>
    <name type="ordered locus">Moth_1655</name>
</gene>
<accession>Q2RHY2</accession>
<comment type="similarity">
    <text evidence="1">Belongs to the UPF0251 family.</text>
</comment>
<sequence length="149" mass="16613">MPRPPICRRVEFLPGVTYFKPAAVPLRELEEVVLAVEELEAIRLKDKEGLEQEDCAARMGVSRPTFVRILNSARDKVADALVNGKAIRVEGGYYHLVGPKVRCRRCGHEWEPEQGGKEACPRCGSEELAGRGPGRGRCHRHGRFGEGEH</sequence>
<evidence type="ECO:0000255" key="1">
    <source>
        <dbReference type="HAMAP-Rule" id="MF_00674"/>
    </source>
</evidence>
<evidence type="ECO:0000256" key="2">
    <source>
        <dbReference type="SAM" id="MobiDB-lite"/>
    </source>
</evidence>
<protein>
    <recommendedName>
        <fullName evidence="1">UPF0251 protein Moth_1655</fullName>
    </recommendedName>
</protein>
<organism>
    <name type="scientific">Moorella thermoacetica (strain ATCC 39073 / JCM 9320)</name>
    <dbReference type="NCBI Taxonomy" id="264732"/>
    <lineage>
        <taxon>Bacteria</taxon>
        <taxon>Bacillati</taxon>
        <taxon>Bacillota</taxon>
        <taxon>Clostridia</taxon>
        <taxon>Moorellales</taxon>
        <taxon>Moorellaceae</taxon>
        <taxon>Moorella</taxon>
    </lineage>
</organism>
<feature type="chain" id="PRO_1000044752" description="UPF0251 protein Moth_1655">
    <location>
        <begin position="1"/>
        <end position="149"/>
    </location>
</feature>
<feature type="region of interest" description="Disordered" evidence="2">
    <location>
        <begin position="129"/>
        <end position="149"/>
    </location>
</feature>
<name>Y1655_MOOTA</name>
<proteinExistence type="inferred from homology"/>